<sequence length="347" mass="36913">MAPQAPDREKALELALAQIEKSHGKGSVMRLGDEVRAPISVIPTGSIALDVALGIGGLPRGRVIEIYGPESSGKTTVALHAVANAQAAGGIAAFIDAEHALDPDYAKKLGVDTDSLLVSQPDTGEQALEIADMLIRSGALDILVIDSVAALVPRAEIEGEMGDSHVGLQARLMSQALRKITGALSNSGTTAIFINQLREKIGVMFGSPETTTGGKALKFYASVRMDVRRIETLKDGTDAVGNRTRVKIVKNKVSPPFKQAEFDILYGKGISKEGSLIDMGVEHGFIRKSGSWFTYEGEQLGQGKENARKFLLENGDVANEIEKKIKEKLNIGAVVTADDVLPAPVDF</sequence>
<evidence type="ECO:0000255" key="1">
    <source>
        <dbReference type="HAMAP-Rule" id="MF_00268"/>
    </source>
</evidence>
<keyword id="KW-0067">ATP-binding</keyword>
<keyword id="KW-0963">Cytoplasm</keyword>
<keyword id="KW-0227">DNA damage</keyword>
<keyword id="KW-0233">DNA recombination</keyword>
<keyword id="KW-0234">DNA repair</keyword>
<keyword id="KW-0238">DNA-binding</keyword>
<keyword id="KW-0547">Nucleotide-binding</keyword>
<keyword id="KW-0742">SOS response</keyword>
<reference key="1">
    <citation type="submission" date="2006-06" db="EMBL/GenBank/DDBJ databases">
        <title>Complete sequence of chromosome of Mycobacterium sp. MCS.</title>
        <authorList>
            <consortium name="US DOE Joint Genome Institute"/>
            <person name="Copeland A."/>
            <person name="Lucas S."/>
            <person name="Lapidus A."/>
            <person name="Barry K."/>
            <person name="Detter J.C."/>
            <person name="Glavina del Rio T."/>
            <person name="Hammon N."/>
            <person name="Israni S."/>
            <person name="Dalin E."/>
            <person name="Tice H."/>
            <person name="Pitluck S."/>
            <person name="Martinez M."/>
            <person name="Schmutz J."/>
            <person name="Larimer F."/>
            <person name="Land M."/>
            <person name="Hauser L."/>
            <person name="Kyrpides N."/>
            <person name="Kim E."/>
            <person name="Miller C.D."/>
            <person name="Hughes J.E."/>
            <person name="Anderson A.J."/>
            <person name="Sims R.C."/>
            <person name="Richardson P."/>
        </authorList>
    </citation>
    <scope>NUCLEOTIDE SEQUENCE [LARGE SCALE GENOMIC DNA]</scope>
    <source>
        <strain>MCS</strain>
    </source>
</reference>
<accession>Q1BA29</accession>
<gene>
    <name evidence="1" type="primary">recA</name>
    <name type="ordered locus">Mmcs_2147</name>
</gene>
<proteinExistence type="inferred from homology"/>
<organism>
    <name type="scientific">Mycobacterium sp. (strain MCS)</name>
    <dbReference type="NCBI Taxonomy" id="164756"/>
    <lineage>
        <taxon>Bacteria</taxon>
        <taxon>Bacillati</taxon>
        <taxon>Actinomycetota</taxon>
        <taxon>Actinomycetes</taxon>
        <taxon>Mycobacteriales</taxon>
        <taxon>Mycobacteriaceae</taxon>
        <taxon>Mycobacterium</taxon>
    </lineage>
</organism>
<comment type="function">
    <text evidence="1">Can catalyze the hydrolysis of ATP in the presence of single-stranded DNA, the ATP-dependent uptake of single-stranded DNA by duplex DNA, and the ATP-dependent hybridization of homologous single-stranded DNAs. It interacts with LexA causing its activation and leading to its autocatalytic cleavage.</text>
</comment>
<comment type="subcellular location">
    <subcellularLocation>
        <location evidence="1">Cytoplasm</location>
    </subcellularLocation>
</comment>
<comment type="similarity">
    <text evidence="1">Belongs to the RecA family.</text>
</comment>
<name>RECA_MYCSS</name>
<protein>
    <recommendedName>
        <fullName evidence="1">Protein RecA</fullName>
    </recommendedName>
    <alternativeName>
        <fullName evidence="1">Recombinase A</fullName>
    </alternativeName>
</protein>
<dbReference type="EMBL" id="CP000384">
    <property type="protein sequence ID" value="ABG08255.1"/>
    <property type="molecule type" value="Genomic_DNA"/>
</dbReference>
<dbReference type="SMR" id="Q1BA29"/>
<dbReference type="KEGG" id="mmc:Mmcs_2147"/>
<dbReference type="HOGENOM" id="CLU_040469_1_2_11"/>
<dbReference type="BioCyc" id="MSP164756:G1G6O-2194-MONOMER"/>
<dbReference type="GO" id="GO:0005829">
    <property type="term" value="C:cytosol"/>
    <property type="evidence" value="ECO:0007669"/>
    <property type="project" value="TreeGrafter"/>
</dbReference>
<dbReference type="GO" id="GO:0005524">
    <property type="term" value="F:ATP binding"/>
    <property type="evidence" value="ECO:0007669"/>
    <property type="project" value="UniProtKB-UniRule"/>
</dbReference>
<dbReference type="GO" id="GO:0016887">
    <property type="term" value="F:ATP hydrolysis activity"/>
    <property type="evidence" value="ECO:0007669"/>
    <property type="project" value="InterPro"/>
</dbReference>
<dbReference type="GO" id="GO:0140664">
    <property type="term" value="F:ATP-dependent DNA damage sensor activity"/>
    <property type="evidence" value="ECO:0007669"/>
    <property type="project" value="InterPro"/>
</dbReference>
<dbReference type="GO" id="GO:0003684">
    <property type="term" value="F:damaged DNA binding"/>
    <property type="evidence" value="ECO:0007669"/>
    <property type="project" value="UniProtKB-UniRule"/>
</dbReference>
<dbReference type="GO" id="GO:0003697">
    <property type="term" value="F:single-stranded DNA binding"/>
    <property type="evidence" value="ECO:0007669"/>
    <property type="project" value="UniProtKB-UniRule"/>
</dbReference>
<dbReference type="GO" id="GO:0006310">
    <property type="term" value="P:DNA recombination"/>
    <property type="evidence" value="ECO:0007669"/>
    <property type="project" value="UniProtKB-UniRule"/>
</dbReference>
<dbReference type="GO" id="GO:0006281">
    <property type="term" value="P:DNA repair"/>
    <property type="evidence" value="ECO:0007669"/>
    <property type="project" value="UniProtKB-UniRule"/>
</dbReference>
<dbReference type="GO" id="GO:0009432">
    <property type="term" value="P:SOS response"/>
    <property type="evidence" value="ECO:0007669"/>
    <property type="project" value="UniProtKB-UniRule"/>
</dbReference>
<dbReference type="CDD" id="cd00983">
    <property type="entry name" value="RecA"/>
    <property type="match status" value="1"/>
</dbReference>
<dbReference type="FunFam" id="3.40.50.300:FF:002436">
    <property type="entry name" value="Protein RecA"/>
    <property type="match status" value="1"/>
</dbReference>
<dbReference type="Gene3D" id="3.40.50.300">
    <property type="entry name" value="P-loop containing nucleotide triphosphate hydrolases"/>
    <property type="match status" value="1"/>
</dbReference>
<dbReference type="HAMAP" id="MF_00268">
    <property type="entry name" value="RecA"/>
    <property type="match status" value="1"/>
</dbReference>
<dbReference type="InterPro" id="IPR003593">
    <property type="entry name" value="AAA+_ATPase"/>
</dbReference>
<dbReference type="InterPro" id="IPR013765">
    <property type="entry name" value="DNA_recomb/repair_RecA"/>
</dbReference>
<dbReference type="InterPro" id="IPR020584">
    <property type="entry name" value="DNA_recomb/repair_RecA_CS"/>
</dbReference>
<dbReference type="InterPro" id="IPR027417">
    <property type="entry name" value="P-loop_NTPase"/>
</dbReference>
<dbReference type="InterPro" id="IPR049261">
    <property type="entry name" value="RecA-like_C"/>
</dbReference>
<dbReference type="InterPro" id="IPR049428">
    <property type="entry name" value="RecA-like_N"/>
</dbReference>
<dbReference type="InterPro" id="IPR020588">
    <property type="entry name" value="RecA_ATP-bd"/>
</dbReference>
<dbReference type="InterPro" id="IPR023400">
    <property type="entry name" value="RecA_C_sf"/>
</dbReference>
<dbReference type="InterPro" id="IPR020587">
    <property type="entry name" value="RecA_monomer-monomer_interface"/>
</dbReference>
<dbReference type="NCBIfam" id="TIGR02012">
    <property type="entry name" value="tigrfam_recA"/>
    <property type="match status" value="1"/>
</dbReference>
<dbReference type="PANTHER" id="PTHR45900:SF1">
    <property type="entry name" value="MITOCHONDRIAL DNA REPAIR PROTEIN RECA HOMOLOG-RELATED"/>
    <property type="match status" value="1"/>
</dbReference>
<dbReference type="PANTHER" id="PTHR45900">
    <property type="entry name" value="RECA"/>
    <property type="match status" value="1"/>
</dbReference>
<dbReference type="Pfam" id="PF00154">
    <property type="entry name" value="RecA"/>
    <property type="match status" value="1"/>
</dbReference>
<dbReference type="Pfam" id="PF21096">
    <property type="entry name" value="RecA_C"/>
    <property type="match status" value="1"/>
</dbReference>
<dbReference type="PRINTS" id="PR00142">
    <property type="entry name" value="RECA"/>
</dbReference>
<dbReference type="SMART" id="SM00382">
    <property type="entry name" value="AAA"/>
    <property type="match status" value="1"/>
</dbReference>
<dbReference type="SUPFAM" id="SSF52540">
    <property type="entry name" value="P-loop containing nucleoside triphosphate hydrolases"/>
    <property type="match status" value="1"/>
</dbReference>
<dbReference type="SUPFAM" id="SSF54752">
    <property type="entry name" value="RecA protein, C-terminal domain"/>
    <property type="match status" value="1"/>
</dbReference>
<dbReference type="PROSITE" id="PS00321">
    <property type="entry name" value="RECA_1"/>
    <property type="match status" value="1"/>
</dbReference>
<dbReference type="PROSITE" id="PS50162">
    <property type="entry name" value="RECA_2"/>
    <property type="match status" value="1"/>
</dbReference>
<dbReference type="PROSITE" id="PS50163">
    <property type="entry name" value="RECA_3"/>
    <property type="match status" value="1"/>
</dbReference>
<feature type="chain" id="PRO_1000078673" description="Protein RecA">
    <location>
        <begin position="1"/>
        <end position="347"/>
    </location>
</feature>
<feature type="binding site" evidence="1">
    <location>
        <begin position="68"/>
        <end position="75"/>
    </location>
    <ligand>
        <name>ATP</name>
        <dbReference type="ChEBI" id="CHEBI:30616"/>
    </ligand>
</feature>